<reference key="1">
    <citation type="submission" date="2004-04" db="EMBL/GenBank/DDBJ databases">
        <authorList>
            <consortium name="NIH - Zebrafish Gene Collection (ZGC) project"/>
        </authorList>
    </citation>
    <scope>NUCLEOTIDE SEQUENCE [LARGE SCALE MRNA]</scope>
    <source>
        <strain>AB</strain>
        <tissue>Kidney</tissue>
    </source>
</reference>
<gene>
    <name type="primary">mlst8</name>
    <name type="synonym">gbl</name>
    <name type="synonym">lst8</name>
    <name type="ORF">zgc:55455</name>
    <name type="ORF">zgc:85668</name>
</gene>
<accession>Q803V5</accession>
<name>LST8_DANRE</name>
<feature type="chain" id="PRO_0000326502" description="Target of rapamycin complex subunit lst8">
    <location>
        <begin position="1"/>
        <end position="326"/>
    </location>
</feature>
<feature type="repeat" description="WD 1">
    <location>
        <begin position="1"/>
        <end position="37"/>
    </location>
</feature>
<feature type="repeat" description="WD 2">
    <location>
        <begin position="40"/>
        <end position="80"/>
    </location>
</feature>
<feature type="repeat" description="WD 3">
    <location>
        <begin position="83"/>
        <end position="122"/>
    </location>
</feature>
<feature type="repeat" description="WD 4">
    <location>
        <begin position="126"/>
        <end position="165"/>
    </location>
</feature>
<feature type="repeat" description="WD 5">
    <location>
        <begin position="168"/>
        <end position="207"/>
    </location>
</feature>
<feature type="repeat" description="WD 6">
    <location>
        <begin position="218"/>
        <end position="257"/>
    </location>
</feature>
<feature type="repeat" description="WD 7">
    <location>
        <begin position="268"/>
        <end position="309"/>
    </location>
</feature>
<evidence type="ECO:0000250" key="1">
    <source>
        <dbReference type="UniProtKB" id="Q9BVC4"/>
    </source>
</evidence>
<evidence type="ECO:0000250" key="2">
    <source>
        <dbReference type="UniProtKB" id="Q9Z2K5"/>
    </source>
</evidence>
<evidence type="ECO:0000305" key="3"/>
<keyword id="KW-0963">Cytoplasm</keyword>
<keyword id="KW-0458">Lysosome</keyword>
<keyword id="KW-0472">Membrane</keyword>
<keyword id="KW-1185">Reference proteome</keyword>
<keyword id="KW-0677">Repeat</keyword>
<keyword id="KW-0853">WD repeat</keyword>
<protein>
    <recommendedName>
        <fullName>Target of rapamycin complex subunit lst8</fullName>
        <shortName>TORC subunit lst8</shortName>
    </recommendedName>
    <alternativeName>
        <fullName>G protein beta subunit-like</fullName>
        <shortName>Gable</shortName>
        <shortName>Protein GbetaL</shortName>
    </alternativeName>
    <alternativeName>
        <fullName>MTOR associated protein, LST8 homolog</fullName>
    </alternativeName>
</protein>
<organism>
    <name type="scientific">Danio rerio</name>
    <name type="common">Zebrafish</name>
    <name type="synonym">Brachydanio rerio</name>
    <dbReference type="NCBI Taxonomy" id="7955"/>
    <lineage>
        <taxon>Eukaryota</taxon>
        <taxon>Metazoa</taxon>
        <taxon>Chordata</taxon>
        <taxon>Craniata</taxon>
        <taxon>Vertebrata</taxon>
        <taxon>Euteleostomi</taxon>
        <taxon>Actinopterygii</taxon>
        <taxon>Neopterygii</taxon>
        <taxon>Teleostei</taxon>
        <taxon>Ostariophysi</taxon>
        <taxon>Cypriniformes</taxon>
        <taxon>Danionidae</taxon>
        <taxon>Danioninae</taxon>
        <taxon>Danio</taxon>
    </lineage>
</organism>
<sequence>MNVNQGTVGSDPVILATAGYDHTVRFWQAHSGICTRTVQHQDSQVNSLEVTPDRSMIAAAGYQHIRMYDLNSNNPNPVINYDGVSKNITSVGFHEDGRWMYTGGEDCMARIWDLRSRNLQCQRIFQVNAPINCVCLHPNQAELIVGDQSGVIHIWDLKTDHNEQLIPEPDVSVNSVHIDPDASYMAAVNSSGNCYVWNLAGGMGDEVTQLIPKTKIPAHKRYSLRCKFSPDSTLLATCSADQTCKIWRTSNFSLMTELSIKSNNPGETSRGWMWDCAFSGDSQYIVTASSDNLARLWCVETGEIKREYSGHQKAVVCLAFNDSVLG</sequence>
<comment type="function">
    <text evidence="1">Subunit of both mTORC1 and mTORC2, which regulates cell growth and survival in response to nutrient and hormonal signals. mTORC1 is activated in response to growth factors or amino acids. In response to nutrients, mTORC1 is recruited to the lysosome membrane and promotes protein, lipid and nucleotide synthesis by phosphorylating several substrates, such as ribosomal protein S6 kinase (RPS6KB1 and RPS6KB2) and EIF4EBP1 (4E-BP1). In the same time, it inhibits catabolic pathways by phosphorylating the autophagy initiation components ULK1 and ATG13, as well as transcription factor TFEB, a master regulators of lysosomal biogenesis and autophagy. The mTORC1 complex is inhibited in response to starvation and amino acid depletion. Within mTORC1, MLST8 interacts directly with MTOR and enhances its kinase activity. In nutrient-poor conditions, stabilizes the MTOR-RPTOR interaction and favors RPTOR-mediated inhibition of MTOR activity. As part of the mTORC2 complex, transduces signals from growth factors to pathways involved in proliferation, cytoskeletal organization, lipogenesis and anabolic output. mTORC2 is also activated by growth factors, but seems to be nutrient-insensitive. In response to growth factors, mTORC2 phosphorylates and activates AGC protein kinase family members, including AKT (AKT1, AKT2 and AKT3), PKC (PRKCA, PRKCB and PRKCE) and SGK1. mTORC2 functions upstream of Rho GTPases to regulate the actin cytoskeleton, probably by activating one or more Rho-type guanine nucleotide exchange factors. mTORC2 promotes the serum-induced formation of stress-fibers or F-actin. Within mTORC2, MLST8 acts as a bridge between MAPKAP1/SIN1 and MTOR.</text>
</comment>
<comment type="subunit">
    <text evidence="1">Part of the mechanistic target of rapamycin complex 1 (mTORC1) which contains MTOR, MLST8 and RPTOR. Component of the mechanistic target of rapamycin complex 2 (mTORC2), consisting in two heterotretramers composed of MTOR, MLST8, RICTOR and MAPKAP1/SIN1.</text>
</comment>
<comment type="subcellular location">
    <subcellularLocation>
        <location evidence="1">Lysosome membrane</location>
    </subcellularLocation>
    <subcellularLocation>
        <location evidence="2">Cytoplasm</location>
    </subcellularLocation>
    <text evidence="1">Targeting to lysosomal membrane depends on amino acid availability: mTORC1 is recruited to lysosome membranes via interaction with GTP-bound form of RagA/RRAGA (or RagB/RRAGB) in complex with the GDP-bound form of RagC/RRAGC (or RagD/RRAGD), promoting its mTORC1 recruitment to the lysosomes.</text>
</comment>
<comment type="similarity">
    <text evidence="3">Belongs to the WD repeat LST8 family.</text>
</comment>
<dbReference type="EMBL" id="BC044176">
    <property type="protein sequence ID" value="AAH44176.1"/>
    <property type="molecule type" value="mRNA"/>
</dbReference>
<dbReference type="EMBL" id="BC068352">
    <property type="protein sequence ID" value="AAH68352.1"/>
    <property type="molecule type" value="mRNA"/>
</dbReference>
<dbReference type="RefSeq" id="NP_001307317.1">
    <property type="nucleotide sequence ID" value="NM_001320388.1"/>
</dbReference>
<dbReference type="SMR" id="Q803V5"/>
<dbReference type="FunCoup" id="Q803V5">
    <property type="interactions" value="1853"/>
</dbReference>
<dbReference type="STRING" id="7955.ENSDARP00000118004"/>
<dbReference type="PaxDb" id="7955-ENSDARP00000118004"/>
<dbReference type="Ensembl" id="ENSDART00000012743">
    <property type="protein sequence ID" value="ENSDARP00000019416"/>
    <property type="gene ID" value="ENSDARG00000003167"/>
</dbReference>
<dbReference type="Ensembl" id="ENSDART00000148326">
    <property type="protein sequence ID" value="ENSDARP00000118004"/>
    <property type="gene ID" value="ENSDARG00000003167"/>
</dbReference>
<dbReference type="Ensembl" id="ENSDART00000162900">
    <property type="protein sequence ID" value="ENSDARP00000137020"/>
    <property type="gene ID" value="ENSDARG00000003167"/>
</dbReference>
<dbReference type="Ensembl" id="ENSDART00000178845">
    <property type="protein sequence ID" value="ENSDARP00000144316"/>
    <property type="gene ID" value="ENSDARG00000003167"/>
</dbReference>
<dbReference type="GeneID" id="792689"/>
<dbReference type="KEGG" id="dre:792689"/>
<dbReference type="AGR" id="ZFIN:ZDB-GENE-030131-6176"/>
<dbReference type="CTD" id="64223"/>
<dbReference type="ZFIN" id="ZDB-GENE-030131-6176">
    <property type="gene designation" value="mlst8"/>
</dbReference>
<dbReference type="eggNOG" id="KOG0315">
    <property type="taxonomic scope" value="Eukaryota"/>
</dbReference>
<dbReference type="InParanoid" id="Q803V5"/>
<dbReference type="OMA" id="VQRNYKH"/>
<dbReference type="OrthoDB" id="400at2759"/>
<dbReference type="PhylomeDB" id="Q803V5"/>
<dbReference type="TreeFam" id="TF318577"/>
<dbReference type="Reactome" id="R-DRE-1632852">
    <property type="pathway name" value="Macroautophagy"/>
</dbReference>
<dbReference type="Reactome" id="R-DRE-165159">
    <property type="pathway name" value="MTOR signalling"/>
</dbReference>
<dbReference type="Reactome" id="R-DRE-166208">
    <property type="pathway name" value="mTORC1-mediated signalling"/>
</dbReference>
<dbReference type="Reactome" id="R-DRE-380972">
    <property type="pathway name" value="Energy dependent regulation of mTOR by LKB1-AMPK"/>
</dbReference>
<dbReference type="Reactome" id="R-DRE-5628897">
    <property type="pathway name" value="TP53 Regulates Metabolic Genes"/>
</dbReference>
<dbReference type="Reactome" id="R-DRE-8943724">
    <property type="pathway name" value="Regulation of PTEN gene transcription"/>
</dbReference>
<dbReference type="Reactome" id="R-DRE-9639288">
    <property type="pathway name" value="Amino acids regulate mTORC1"/>
</dbReference>
<dbReference type="PRO" id="PR:Q803V5"/>
<dbReference type="Proteomes" id="UP000000437">
    <property type="component" value="Alternate scaffold 12"/>
</dbReference>
<dbReference type="Proteomes" id="UP000000437">
    <property type="component" value="Chromosome 12"/>
</dbReference>
<dbReference type="Bgee" id="ENSDARG00000003167">
    <property type="expression patterns" value="Expressed in testis and 26 other cell types or tissues"/>
</dbReference>
<dbReference type="ExpressionAtlas" id="Q803V5">
    <property type="expression patterns" value="baseline and differential"/>
</dbReference>
<dbReference type="GO" id="GO:0005737">
    <property type="term" value="C:cytoplasm"/>
    <property type="evidence" value="ECO:0000250"/>
    <property type="project" value="UniProtKB"/>
</dbReference>
<dbReference type="GO" id="GO:0005765">
    <property type="term" value="C:lysosomal membrane"/>
    <property type="evidence" value="ECO:0007669"/>
    <property type="project" value="UniProtKB-SubCell"/>
</dbReference>
<dbReference type="GO" id="GO:0031931">
    <property type="term" value="C:TORC1 complex"/>
    <property type="evidence" value="ECO:0000318"/>
    <property type="project" value="GO_Central"/>
</dbReference>
<dbReference type="GO" id="GO:0031932">
    <property type="term" value="C:TORC2 complex"/>
    <property type="evidence" value="ECO:0000250"/>
    <property type="project" value="UniProtKB"/>
</dbReference>
<dbReference type="GO" id="GO:0032956">
    <property type="term" value="P:regulation of actin cytoskeleton organization"/>
    <property type="evidence" value="ECO:0000318"/>
    <property type="project" value="GO_Central"/>
</dbReference>
<dbReference type="GO" id="GO:0031929">
    <property type="term" value="P:TOR signaling"/>
    <property type="evidence" value="ECO:0000318"/>
    <property type="project" value="GO_Central"/>
</dbReference>
<dbReference type="GO" id="GO:0038203">
    <property type="term" value="P:TORC2 signaling"/>
    <property type="evidence" value="ECO:0000250"/>
    <property type="project" value="UniProtKB"/>
</dbReference>
<dbReference type="CDD" id="cd00200">
    <property type="entry name" value="WD40"/>
    <property type="match status" value="1"/>
</dbReference>
<dbReference type="FunFam" id="2.130.10.10:FF:000086">
    <property type="entry name" value="target of rapamycin complex subunit LST8"/>
    <property type="match status" value="1"/>
</dbReference>
<dbReference type="Gene3D" id="2.130.10.10">
    <property type="entry name" value="YVTN repeat-like/Quinoprotein amine dehydrogenase"/>
    <property type="match status" value="1"/>
</dbReference>
<dbReference type="InterPro" id="IPR037588">
    <property type="entry name" value="MLST8"/>
</dbReference>
<dbReference type="InterPro" id="IPR011047">
    <property type="entry name" value="Quinoprotein_ADH-like_sf"/>
</dbReference>
<dbReference type="InterPro" id="IPR015943">
    <property type="entry name" value="WD40/YVTN_repeat-like_dom_sf"/>
</dbReference>
<dbReference type="InterPro" id="IPR019775">
    <property type="entry name" value="WD40_repeat_CS"/>
</dbReference>
<dbReference type="InterPro" id="IPR001680">
    <property type="entry name" value="WD40_rpt"/>
</dbReference>
<dbReference type="PANTHER" id="PTHR19842">
    <property type="entry name" value="G BETA-LIKE PROTEIN GBL"/>
    <property type="match status" value="1"/>
</dbReference>
<dbReference type="PANTHER" id="PTHR19842:SF0">
    <property type="entry name" value="TARGET OF RAPAMYCIN COMPLEX SUBUNIT LST8"/>
    <property type="match status" value="1"/>
</dbReference>
<dbReference type="Pfam" id="PF00400">
    <property type="entry name" value="WD40"/>
    <property type="match status" value="6"/>
</dbReference>
<dbReference type="SMART" id="SM00320">
    <property type="entry name" value="WD40"/>
    <property type="match status" value="6"/>
</dbReference>
<dbReference type="SUPFAM" id="SSF50998">
    <property type="entry name" value="Quinoprotein alcohol dehydrogenase-like"/>
    <property type="match status" value="1"/>
</dbReference>
<dbReference type="PROSITE" id="PS00678">
    <property type="entry name" value="WD_REPEATS_1"/>
    <property type="match status" value="1"/>
</dbReference>
<dbReference type="PROSITE" id="PS50082">
    <property type="entry name" value="WD_REPEATS_2"/>
    <property type="match status" value="3"/>
</dbReference>
<dbReference type="PROSITE" id="PS50294">
    <property type="entry name" value="WD_REPEATS_REGION"/>
    <property type="match status" value="1"/>
</dbReference>
<proteinExistence type="evidence at transcript level"/>